<name>SYV_STRP8</name>
<keyword id="KW-0030">Aminoacyl-tRNA synthetase</keyword>
<keyword id="KW-0067">ATP-binding</keyword>
<keyword id="KW-0175">Coiled coil</keyword>
<keyword id="KW-0963">Cytoplasm</keyword>
<keyword id="KW-0436">Ligase</keyword>
<keyword id="KW-0547">Nucleotide-binding</keyword>
<keyword id="KW-0648">Protein biosynthesis</keyword>
<accession>Q8P040</accession>
<protein>
    <recommendedName>
        <fullName evidence="1">Valine--tRNA ligase</fullName>
        <ecNumber evidence="1">6.1.1.9</ecNumber>
    </recommendedName>
    <alternativeName>
        <fullName evidence="1">Valyl-tRNA synthetase</fullName>
        <shortName evidence="1">ValRS</shortName>
    </alternativeName>
</protein>
<comment type="function">
    <text evidence="1">Catalyzes the attachment of valine to tRNA(Val). As ValRS can inadvertently accommodate and process structurally similar amino acids such as threonine, to avoid such errors, it has a 'posttransfer' editing activity that hydrolyzes mischarged Thr-tRNA(Val) in a tRNA-dependent manner.</text>
</comment>
<comment type="catalytic activity">
    <reaction evidence="1">
        <text>tRNA(Val) + L-valine + ATP = L-valyl-tRNA(Val) + AMP + diphosphate</text>
        <dbReference type="Rhea" id="RHEA:10704"/>
        <dbReference type="Rhea" id="RHEA-COMP:9672"/>
        <dbReference type="Rhea" id="RHEA-COMP:9708"/>
        <dbReference type="ChEBI" id="CHEBI:30616"/>
        <dbReference type="ChEBI" id="CHEBI:33019"/>
        <dbReference type="ChEBI" id="CHEBI:57762"/>
        <dbReference type="ChEBI" id="CHEBI:78442"/>
        <dbReference type="ChEBI" id="CHEBI:78537"/>
        <dbReference type="ChEBI" id="CHEBI:456215"/>
        <dbReference type="EC" id="6.1.1.9"/>
    </reaction>
</comment>
<comment type="subunit">
    <text evidence="1">Monomer.</text>
</comment>
<comment type="subcellular location">
    <subcellularLocation>
        <location evidence="1">Cytoplasm</location>
    </subcellularLocation>
</comment>
<comment type="domain">
    <text evidence="1">ValRS has two distinct active sites: one for aminoacylation and one for editing. The misactivated threonine is translocated from the active site to the editing site.</text>
</comment>
<comment type="domain">
    <text evidence="1">The C-terminal coiled-coil domain is crucial for aminoacylation activity.</text>
</comment>
<comment type="similarity">
    <text evidence="1">Belongs to the class-I aminoacyl-tRNA synthetase family. ValS type 1 subfamily.</text>
</comment>
<evidence type="ECO:0000255" key="1">
    <source>
        <dbReference type="HAMAP-Rule" id="MF_02004"/>
    </source>
</evidence>
<dbReference type="EC" id="6.1.1.9" evidence="1"/>
<dbReference type="EMBL" id="AE009949">
    <property type="protein sequence ID" value="AAL98142.1"/>
    <property type="molecule type" value="Genomic_DNA"/>
</dbReference>
<dbReference type="RefSeq" id="WP_011018024.1">
    <property type="nucleotide sequence ID" value="NC_003485.1"/>
</dbReference>
<dbReference type="SMR" id="Q8P040"/>
<dbReference type="KEGG" id="spm:spyM18_1579"/>
<dbReference type="HOGENOM" id="CLU_001493_0_2_9"/>
<dbReference type="GO" id="GO:0005829">
    <property type="term" value="C:cytosol"/>
    <property type="evidence" value="ECO:0007669"/>
    <property type="project" value="TreeGrafter"/>
</dbReference>
<dbReference type="GO" id="GO:0002161">
    <property type="term" value="F:aminoacyl-tRNA deacylase activity"/>
    <property type="evidence" value="ECO:0007669"/>
    <property type="project" value="InterPro"/>
</dbReference>
<dbReference type="GO" id="GO:0005524">
    <property type="term" value="F:ATP binding"/>
    <property type="evidence" value="ECO:0007669"/>
    <property type="project" value="UniProtKB-UniRule"/>
</dbReference>
<dbReference type="GO" id="GO:0004832">
    <property type="term" value="F:valine-tRNA ligase activity"/>
    <property type="evidence" value="ECO:0007669"/>
    <property type="project" value="UniProtKB-UniRule"/>
</dbReference>
<dbReference type="GO" id="GO:0006438">
    <property type="term" value="P:valyl-tRNA aminoacylation"/>
    <property type="evidence" value="ECO:0007669"/>
    <property type="project" value="UniProtKB-UniRule"/>
</dbReference>
<dbReference type="CDD" id="cd07962">
    <property type="entry name" value="Anticodon_Ia_Val"/>
    <property type="match status" value="1"/>
</dbReference>
<dbReference type="CDD" id="cd00817">
    <property type="entry name" value="ValRS_core"/>
    <property type="match status" value="1"/>
</dbReference>
<dbReference type="FunFam" id="1.10.287.380:FF:000001">
    <property type="entry name" value="Valine--tRNA ligase"/>
    <property type="match status" value="1"/>
</dbReference>
<dbReference type="FunFam" id="1.10.730.10:FF:000014">
    <property type="entry name" value="Valine--tRNA ligase"/>
    <property type="match status" value="1"/>
</dbReference>
<dbReference type="FunFam" id="3.40.50.620:FF:000032">
    <property type="entry name" value="Valine--tRNA ligase"/>
    <property type="match status" value="1"/>
</dbReference>
<dbReference type="FunFam" id="3.40.50.620:FF:000098">
    <property type="entry name" value="Valine--tRNA ligase"/>
    <property type="match status" value="1"/>
</dbReference>
<dbReference type="FunFam" id="3.90.740.10:FF:000005">
    <property type="entry name" value="Valine--tRNA ligase, mitochondrial"/>
    <property type="match status" value="1"/>
</dbReference>
<dbReference type="Gene3D" id="3.40.50.620">
    <property type="entry name" value="HUPs"/>
    <property type="match status" value="2"/>
</dbReference>
<dbReference type="Gene3D" id="1.10.730.10">
    <property type="entry name" value="Isoleucyl-tRNA Synthetase, Domain 1"/>
    <property type="match status" value="1"/>
</dbReference>
<dbReference type="Gene3D" id="1.10.287.380">
    <property type="entry name" value="Valyl-tRNA synthetase, C-terminal domain"/>
    <property type="match status" value="1"/>
</dbReference>
<dbReference type="Gene3D" id="3.90.740.10">
    <property type="entry name" value="Valyl/Leucyl/Isoleucyl-tRNA synthetase, editing domain"/>
    <property type="match status" value="1"/>
</dbReference>
<dbReference type="HAMAP" id="MF_02004">
    <property type="entry name" value="Val_tRNA_synth_type1"/>
    <property type="match status" value="1"/>
</dbReference>
<dbReference type="InterPro" id="IPR001412">
    <property type="entry name" value="aa-tRNA-synth_I_CS"/>
</dbReference>
<dbReference type="InterPro" id="IPR002300">
    <property type="entry name" value="aa-tRNA-synth_Ia"/>
</dbReference>
<dbReference type="InterPro" id="IPR033705">
    <property type="entry name" value="Anticodon_Ia_Val"/>
</dbReference>
<dbReference type="InterPro" id="IPR013155">
    <property type="entry name" value="M/V/L/I-tRNA-synth_anticd-bd"/>
</dbReference>
<dbReference type="InterPro" id="IPR014729">
    <property type="entry name" value="Rossmann-like_a/b/a_fold"/>
</dbReference>
<dbReference type="InterPro" id="IPR010978">
    <property type="entry name" value="tRNA-bd_arm"/>
</dbReference>
<dbReference type="InterPro" id="IPR009080">
    <property type="entry name" value="tRNAsynth_Ia_anticodon-bd"/>
</dbReference>
<dbReference type="InterPro" id="IPR037118">
    <property type="entry name" value="Val-tRNA_synth_C_sf"/>
</dbReference>
<dbReference type="InterPro" id="IPR019499">
    <property type="entry name" value="Val-tRNA_synth_tRNA-bd"/>
</dbReference>
<dbReference type="InterPro" id="IPR009008">
    <property type="entry name" value="Val/Leu/Ile-tRNA-synth_edit"/>
</dbReference>
<dbReference type="InterPro" id="IPR002303">
    <property type="entry name" value="Valyl-tRNA_ligase"/>
</dbReference>
<dbReference type="NCBIfam" id="NF004349">
    <property type="entry name" value="PRK05729.1"/>
    <property type="match status" value="1"/>
</dbReference>
<dbReference type="NCBIfam" id="TIGR00422">
    <property type="entry name" value="valS"/>
    <property type="match status" value="1"/>
</dbReference>
<dbReference type="PANTHER" id="PTHR11946:SF93">
    <property type="entry name" value="VALINE--TRNA LIGASE, CHLOROPLASTIC_MITOCHONDRIAL 2"/>
    <property type="match status" value="1"/>
</dbReference>
<dbReference type="PANTHER" id="PTHR11946">
    <property type="entry name" value="VALYL-TRNA SYNTHETASES"/>
    <property type="match status" value="1"/>
</dbReference>
<dbReference type="Pfam" id="PF08264">
    <property type="entry name" value="Anticodon_1"/>
    <property type="match status" value="1"/>
</dbReference>
<dbReference type="Pfam" id="PF00133">
    <property type="entry name" value="tRNA-synt_1"/>
    <property type="match status" value="1"/>
</dbReference>
<dbReference type="Pfam" id="PF10458">
    <property type="entry name" value="Val_tRNA-synt_C"/>
    <property type="match status" value="1"/>
</dbReference>
<dbReference type="PRINTS" id="PR00986">
    <property type="entry name" value="TRNASYNTHVAL"/>
</dbReference>
<dbReference type="SUPFAM" id="SSF47323">
    <property type="entry name" value="Anticodon-binding domain of a subclass of class I aminoacyl-tRNA synthetases"/>
    <property type="match status" value="1"/>
</dbReference>
<dbReference type="SUPFAM" id="SSF52374">
    <property type="entry name" value="Nucleotidylyl transferase"/>
    <property type="match status" value="1"/>
</dbReference>
<dbReference type="SUPFAM" id="SSF46589">
    <property type="entry name" value="tRNA-binding arm"/>
    <property type="match status" value="1"/>
</dbReference>
<dbReference type="SUPFAM" id="SSF50677">
    <property type="entry name" value="ValRS/IleRS/LeuRS editing domain"/>
    <property type="match status" value="1"/>
</dbReference>
<dbReference type="PROSITE" id="PS00178">
    <property type="entry name" value="AA_TRNA_LIGASE_I"/>
    <property type="match status" value="1"/>
</dbReference>
<feature type="chain" id="PRO_0000224577" description="Valine--tRNA ligase">
    <location>
        <begin position="1"/>
        <end position="882"/>
    </location>
</feature>
<feature type="coiled-coil region" evidence="1">
    <location>
        <begin position="808"/>
        <end position="882"/>
    </location>
</feature>
<feature type="short sequence motif" description="'HIGH' region">
    <location>
        <begin position="45"/>
        <end position="55"/>
    </location>
</feature>
<feature type="short sequence motif" description="'KMSKS' region">
    <location>
        <begin position="519"/>
        <end position="523"/>
    </location>
</feature>
<feature type="binding site" evidence="1">
    <location>
        <position position="522"/>
    </location>
    <ligand>
        <name>ATP</name>
        <dbReference type="ChEBI" id="CHEBI:30616"/>
    </ligand>
</feature>
<proteinExistence type="inferred from homology"/>
<organism>
    <name type="scientific">Streptococcus pyogenes serotype M18 (strain MGAS8232)</name>
    <dbReference type="NCBI Taxonomy" id="186103"/>
    <lineage>
        <taxon>Bacteria</taxon>
        <taxon>Bacillati</taxon>
        <taxon>Bacillota</taxon>
        <taxon>Bacilli</taxon>
        <taxon>Lactobacillales</taxon>
        <taxon>Streptococcaceae</taxon>
        <taxon>Streptococcus</taxon>
    </lineage>
</organism>
<reference key="1">
    <citation type="journal article" date="2002" name="Proc. Natl. Acad. Sci. U.S.A.">
        <title>Genome sequence and comparative microarray analysis of serotype M18 group A Streptococcus strains associated with acute rheumatic fever outbreaks.</title>
        <authorList>
            <person name="Smoot J.C."/>
            <person name="Barbian K.D."/>
            <person name="Van Gompel J.J."/>
            <person name="Smoot L.M."/>
            <person name="Chaussee M.S."/>
            <person name="Sylva G.L."/>
            <person name="Sturdevant D.E."/>
            <person name="Ricklefs S.M."/>
            <person name="Porcella S.F."/>
            <person name="Parkins L.D."/>
            <person name="Beres S.B."/>
            <person name="Campbell D.S."/>
            <person name="Smith T.M."/>
            <person name="Zhang Q."/>
            <person name="Kapur V."/>
            <person name="Daly J.A."/>
            <person name="Veasy L.G."/>
            <person name="Musser J.M."/>
        </authorList>
    </citation>
    <scope>NUCLEOTIDE SEQUENCE [LARGE SCALE GENOMIC DNA]</scope>
    <source>
        <strain>MGAS8232</strain>
    </source>
</reference>
<sequence length="882" mass="100957">MTELSPKYNPAEVEAGRYQKWLDADVFKPSGDQKAKPYSIVIPPPNVTGKLHLGHAWDTTLQDIIIRQKRMQGFDTLWLPGMDHAGIATQAKVEERLREQGISRYDLGRDKFLDKVWEWKDEYATTIKEQWGKMGLSVDYSRERFTLDEGLSKAVRKVFVDLYKKGWIYRGEFIINWDPAARTALSDIEVIHKDVEGAFYHMNYMLEDDSRALQVATTRPETMFGDVAVAVNPEDPRYKDLIGKHVILPIVNKLIPIVGDEHADPEFGTGVVKITPAHDPNDFEVGQRHNLPQVNVMNDDGTMNELAGDFAGMDRFEARQATVAKLEELGALVNIEKRVHSVGHSERSGAVVEPRLSTQWFVKMDELAKQAMDNQETDDRVDFYPPRFNDTFLQWMENVHDWVISRQLWWGHQIPAWYNAEGEIYVGEEAPEGDGWTQDEDVLDTWFSSALWPFSTMGWPDTDVEDFKRYFPTSTLVTGYDIIFFWVSRMIFQSLEFTGRQPFQNVLIHGLIRDEEGRKMSKSLGNGIDPMDVIEKYGADSLRWFLSNGSAPGQDVRFSYEKMDASWNFINKIWNISRYILMNNEGLSLEEAESNVAKVAASEAGNVTDQWILHNLNETIAKVTENFDKFEFGVAGHILYNFIWEEFANWYVELTKEVLYSDNEAEKVITRSVLLYTLDKILRLLHPIMPFVTEEIYAQYAQGSIVTVDYPTVTPAFENEAAHKGVESLKDLIRAVRNARAEVNVAPSKPITILVKTADSELEDFFTSNVNYIKRFTNPEKLEISSAIAAPELAMTSIITGAEIYLPLADLLNVEEELARLDKELAKWQKELDMVGKKLGNERFVANAKPEVVQKEKDKQADYQAKYDATQERIAEMHKLVK</sequence>
<gene>
    <name evidence="1" type="primary">valS</name>
    <name type="ordered locus">spyM18_1579</name>
</gene>